<gene>
    <name evidence="1" type="primary">secB</name>
    <name type="ordered locus">BAV0240</name>
</gene>
<feature type="chain" id="PRO_1000062453" description="Protein-export protein SecB">
    <location>
        <begin position="1"/>
        <end position="172"/>
    </location>
</feature>
<protein>
    <recommendedName>
        <fullName evidence="1">Protein-export protein SecB</fullName>
    </recommendedName>
</protein>
<keyword id="KW-0143">Chaperone</keyword>
<keyword id="KW-0963">Cytoplasm</keyword>
<keyword id="KW-0653">Protein transport</keyword>
<keyword id="KW-1185">Reference proteome</keyword>
<keyword id="KW-0811">Translocation</keyword>
<keyword id="KW-0813">Transport</keyword>
<organism>
    <name type="scientific">Bordetella avium (strain 197N)</name>
    <dbReference type="NCBI Taxonomy" id="360910"/>
    <lineage>
        <taxon>Bacteria</taxon>
        <taxon>Pseudomonadati</taxon>
        <taxon>Pseudomonadota</taxon>
        <taxon>Betaproteobacteria</taxon>
        <taxon>Burkholderiales</taxon>
        <taxon>Alcaligenaceae</taxon>
        <taxon>Bordetella</taxon>
    </lineage>
</organism>
<reference key="1">
    <citation type="journal article" date="2006" name="J. Bacteriol.">
        <title>Comparison of the genome sequence of the poultry pathogen Bordetella avium with those of B. bronchiseptica, B. pertussis, and B. parapertussis reveals extensive diversity in surface structures associated with host interaction.</title>
        <authorList>
            <person name="Sebaihia M."/>
            <person name="Preston A."/>
            <person name="Maskell D.J."/>
            <person name="Kuzmiak H."/>
            <person name="Connell T.D."/>
            <person name="King N.D."/>
            <person name="Orndorff P.E."/>
            <person name="Miyamoto D.M."/>
            <person name="Thomson N.R."/>
            <person name="Harris D."/>
            <person name="Goble A."/>
            <person name="Lord A."/>
            <person name="Murphy L."/>
            <person name="Quail M.A."/>
            <person name="Rutter S."/>
            <person name="Squares R."/>
            <person name="Squares S."/>
            <person name="Woodward J."/>
            <person name="Parkhill J."/>
            <person name="Temple L.M."/>
        </authorList>
    </citation>
    <scope>NUCLEOTIDE SEQUENCE [LARGE SCALE GENOMIC DNA]</scope>
    <source>
        <strain>197N</strain>
    </source>
</reference>
<name>SECB_BORA1</name>
<dbReference type="EMBL" id="AM167904">
    <property type="protein sequence ID" value="CAJ47845.1"/>
    <property type="molecule type" value="Genomic_DNA"/>
</dbReference>
<dbReference type="RefSeq" id="WP_012415943.1">
    <property type="nucleotide sequence ID" value="NC_010645.1"/>
</dbReference>
<dbReference type="SMR" id="Q2L0A9"/>
<dbReference type="STRING" id="360910.BAV0240"/>
<dbReference type="GeneID" id="92936512"/>
<dbReference type="KEGG" id="bav:BAV0240"/>
<dbReference type="eggNOG" id="COG1952">
    <property type="taxonomic scope" value="Bacteria"/>
</dbReference>
<dbReference type="HOGENOM" id="CLU_111574_1_0_4"/>
<dbReference type="OrthoDB" id="9795145at2"/>
<dbReference type="Proteomes" id="UP000001977">
    <property type="component" value="Chromosome"/>
</dbReference>
<dbReference type="GO" id="GO:0005737">
    <property type="term" value="C:cytoplasm"/>
    <property type="evidence" value="ECO:0007669"/>
    <property type="project" value="UniProtKB-SubCell"/>
</dbReference>
<dbReference type="GO" id="GO:0051082">
    <property type="term" value="F:unfolded protein binding"/>
    <property type="evidence" value="ECO:0007669"/>
    <property type="project" value="InterPro"/>
</dbReference>
<dbReference type="GO" id="GO:0006457">
    <property type="term" value="P:protein folding"/>
    <property type="evidence" value="ECO:0007669"/>
    <property type="project" value="UniProtKB-UniRule"/>
</dbReference>
<dbReference type="GO" id="GO:0051262">
    <property type="term" value="P:protein tetramerization"/>
    <property type="evidence" value="ECO:0007669"/>
    <property type="project" value="InterPro"/>
</dbReference>
<dbReference type="GO" id="GO:0015031">
    <property type="term" value="P:protein transport"/>
    <property type="evidence" value="ECO:0007669"/>
    <property type="project" value="UniProtKB-UniRule"/>
</dbReference>
<dbReference type="Gene3D" id="3.10.420.10">
    <property type="entry name" value="SecB-like"/>
    <property type="match status" value="1"/>
</dbReference>
<dbReference type="HAMAP" id="MF_00821">
    <property type="entry name" value="SecB"/>
    <property type="match status" value="1"/>
</dbReference>
<dbReference type="InterPro" id="IPR003708">
    <property type="entry name" value="SecB"/>
</dbReference>
<dbReference type="InterPro" id="IPR035958">
    <property type="entry name" value="SecB-like_sf"/>
</dbReference>
<dbReference type="NCBIfam" id="NF004394">
    <property type="entry name" value="PRK05751.1-5"/>
    <property type="match status" value="1"/>
</dbReference>
<dbReference type="NCBIfam" id="TIGR00809">
    <property type="entry name" value="secB"/>
    <property type="match status" value="1"/>
</dbReference>
<dbReference type="PANTHER" id="PTHR36918">
    <property type="match status" value="1"/>
</dbReference>
<dbReference type="PANTHER" id="PTHR36918:SF1">
    <property type="entry name" value="PROTEIN-EXPORT PROTEIN SECB"/>
    <property type="match status" value="1"/>
</dbReference>
<dbReference type="Pfam" id="PF02556">
    <property type="entry name" value="SecB"/>
    <property type="match status" value="1"/>
</dbReference>
<dbReference type="PRINTS" id="PR01594">
    <property type="entry name" value="SECBCHAPRONE"/>
</dbReference>
<dbReference type="SUPFAM" id="SSF54611">
    <property type="entry name" value="SecB-like"/>
    <property type="match status" value="1"/>
</dbReference>
<evidence type="ECO:0000255" key="1">
    <source>
        <dbReference type="HAMAP-Rule" id="MF_00821"/>
    </source>
</evidence>
<sequence length="172" mass="18914">MADQDQNTQQTGSEAPAFNLQRVYLKDLSVEMPNAPHIFLEQEGPAVEVTINVGGQRLAETVFESTVTVTVTTRVNDKVLYLVEGTQAGIFELANIPPEQMDPILGIVCPTMLYPYLRANVADAITRTSLPALHLTEVNFQALYEQRLAEMAQQQEQSADSGIILPPSATRQ</sequence>
<comment type="function">
    <text evidence="1">One of the proteins required for the normal export of preproteins out of the cell cytoplasm. It is a molecular chaperone that binds to a subset of precursor proteins, maintaining them in a translocation-competent state. It also specifically binds to its receptor SecA.</text>
</comment>
<comment type="subunit">
    <text evidence="1">Homotetramer, a dimer of dimers. One homotetramer interacts with 1 SecA dimer.</text>
</comment>
<comment type="subcellular location">
    <subcellularLocation>
        <location evidence="1">Cytoplasm</location>
    </subcellularLocation>
</comment>
<comment type="similarity">
    <text evidence="1">Belongs to the SecB family.</text>
</comment>
<accession>Q2L0A9</accession>
<proteinExistence type="inferred from homology"/>